<keyword id="KW-0342">GTP-binding</keyword>
<keyword id="KW-0547">Nucleotide-binding</keyword>
<keyword id="KW-1185">Reference proteome</keyword>
<keyword id="KW-0677">Repeat</keyword>
<keyword id="KW-0690">Ribosome biogenesis</keyword>
<comment type="function">
    <text evidence="1">GTPase that plays an essential role in the late steps of ribosome biogenesis.</text>
</comment>
<comment type="subunit">
    <text evidence="1">Associates with the 50S ribosomal subunit.</text>
</comment>
<comment type="similarity">
    <text evidence="1">Belongs to the TRAFAC class TrmE-Era-EngA-EngB-Septin-like GTPase superfamily. EngA (Der) GTPase family.</text>
</comment>
<evidence type="ECO:0000255" key="1">
    <source>
        <dbReference type="HAMAP-Rule" id="MF_00195"/>
    </source>
</evidence>
<gene>
    <name evidence="1" type="primary">der</name>
    <name type="synonym">engA</name>
    <name type="ordered locus">alr0483</name>
</gene>
<sequence length="453" mass="50731">MGLPIVAIIGRPNVGKSTLVNRLAGEQTAIVHDEPGVTRDRTYLPAYWSDREFQVVDTGGLVFNDDTEFLPLIRQQALAALHEASAAIFVVNGQTGPNSADEEIAEWLRQQPVPVFLAVNKCESPDQGSIQASEFWELGLGEPYPISAIHGNGTGELLDELIKHLPPVTELEENNEIKIAIIGRPNVGKSSLLNAFAGEERVIVSPISGTTRDAIDTFIERDGQNYRLIDTAGIRKKKSIDYGTEFFSINRAFKAIRRADVVLLVIDALDGVTEQDQKLAGRILDEGKACVVVVNKWDAVEKDSYTIYDYEKNLEARLHFTEWADTIYVSAVTGQRVEKILELVTKANEEHKRRVSTSVINEVLEDAVRWHSPPTSRGGRQGRIYYGTQVSTQPPTIALFVNEAKRFNDNYRRYIERQFRQQLGFKGTPIRLLWRSKKVRDVESGSANRATRV</sequence>
<feature type="chain" id="PRO_0000178959" description="GTPase Der">
    <location>
        <begin position="1"/>
        <end position="453"/>
    </location>
</feature>
<feature type="domain" description="EngA-type G 1">
    <location>
        <begin position="4"/>
        <end position="169"/>
    </location>
</feature>
<feature type="domain" description="EngA-type G 2">
    <location>
        <begin position="177"/>
        <end position="352"/>
    </location>
</feature>
<feature type="domain" description="KH-like" evidence="1">
    <location>
        <begin position="353"/>
        <end position="438"/>
    </location>
</feature>
<feature type="binding site" evidence="1">
    <location>
        <begin position="10"/>
        <end position="17"/>
    </location>
    <ligand>
        <name>GTP</name>
        <dbReference type="ChEBI" id="CHEBI:37565"/>
        <label>1</label>
    </ligand>
</feature>
<feature type="binding site" evidence="1">
    <location>
        <begin position="57"/>
        <end position="61"/>
    </location>
    <ligand>
        <name>GTP</name>
        <dbReference type="ChEBI" id="CHEBI:37565"/>
        <label>1</label>
    </ligand>
</feature>
<feature type="binding site" evidence="1">
    <location>
        <begin position="120"/>
        <end position="123"/>
    </location>
    <ligand>
        <name>GTP</name>
        <dbReference type="ChEBI" id="CHEBI:37565"/>
        <label>1</label>
    </ligand>
</feature>
<feature type="binding site" evidence="1">
    <location>
        <begin position="183"/>
        <end position="190"/>
    </location>
    <ligand>
        <name>GTP</name>
        <dbReference type="ChEBI" id="CHEBI:37565"/>
        <label>2</label>
    </ligand>
</feature>
<feature type="binding site" evidence="1">
    <location>
        <begin position="230"/>
        <end position="234"/>
    </location>
    <ligand>
        <name>GTP</name>
        <dbReference type="ChEBI" id="CHEBI:37565"/>
        <label>2</label>
    </ligand>
</feature>
<feature type="binding site" evidence="1">
    <location>
        <begin position="295"/>
        <end position="298"/>
    </location>
    <ligand>
        <name>GTP</name>
        <dbReference type="ChEBI" id="CHEBI:37565"/>
        <label>2</label>
    </ligand>
</feature>
<accession>Q8YZH7</accession>
<proteinExistence type="inferred from homology"/>
<reference key="1">
    <citation type="journal article" date="2001" name="DNA Res.">
        <title>Complete genomic sequence of the filamentous nitrogen-fixing cyanobacterium Anabaena sp. strain PCC 7120.</title>
        <authorList>
            <person name="Kaneko T."/>
            <person name="Nakamura Y."/>
            <person name="Wolk C.P."/>
            <person name="Kuritz T."/>
            <person name="Sasamoto S."/>
            <person name="Watanabe A."/>
            <person name="Iriguchi M."/>
            <person name="Ishikawa A."/>
            <person name="Kawashima K."/>
            <person name="Kimura T."/>
            <person name="Kishida Y."/>
            <person name="Kohara M."/>
            <person name="Matsumoto M."/>
            <person name="Matsuno A."/>
            <person name="Muraki A."/>
            <person name="Nakazaki N."/>
            <person name="Shimpo S."/>
            <person name="Sugimoto M."/>
            <person name="Takazawa M."/>
            <person name="Yamada M."/>
            <person name="Yasuda M."/>
            <person name="Tabata S."/>
        </authorList>
    </citation>
    <scope>NUCLEOTIDE SEQUENCE [LARGE SCALE GENOMIC DNA]</scope>
    <source>
        <strain>PCC 7120 / SAG 25.82 / UTEX 2576</strain>
    </source>
</reference>
<name>DER_NOSS1</name>
<organism>
    <name type="scientific">Nostoc sp. (strain PCC 7120 / SAG 25.82 / UTEX 2576)</name>
    <dbReference type="NCBI Taxonomy" id="103690"/>
    <lineage>
        <taxon>Bacteria</taxon>
        <taxon>Bacillati</taxon>
        <taxon>Cyanobacteriota</taxon>
        <taxon>Cyanophyceae</taxon>
        <taxon>Nostocales</taxon>
        <taxon>Nostocaceae</taxon>
        <taxon>Nostoc</taxon>
    </lineage>
</organism>
<dbReference type="EMBL" id="BA000019">
    <property type="protein sequence ID" value="BAB72441.1"/>
    <property type="molecule type" value="Genomic_DNA"/>
</dbReference>
<dbReference type="PIR" id="AB1867">
    <property type="entry name" value="AB1867"/>
</dbReference>
<dbReference type="RefSeq" id="WP_010994659.1">
    <property type="nucleotide sequence ID" value="NZ_RSCN01000024.1"/>
</dbReference>
<dbReference type="SMR" id="Q8YZH7"/>
<dbReference type="STRING" id="103690.gene:10492492"/>
<dbReference type="KEGG" id="ana:alr0483"/>
<dbReference type="eggNOG" id="COG1160">
    <property type="taxonomic scope" value="Bacteria"/>
</dbReference>
<dbReference type="OrthoDB" id="9805918at2"/>
<dbReference type="Proteomes" id="UP000002483">
    <property type="component" value="Chromosome"/>
</dbReference>
<dbReference type="GO" id="GO:0005525">
    <property type="term" value="F:GTP binding"/>
    <property type="evidence" value="ECO:0007669"/>
    <property type="project" value="UniProtKB-UniRule"/>
</dbReference>
<dbReference type="GO" id="GO:0043022">
    <property type="term" value="F:ribosome binding"/>
    <property type="evidence" value="ECO:0007669"/>
    <property type="project" value="TreeGrafter"/>
</dbReference>
<dbReference type="GO" id="GO:0042254">
    <property type="term" value="P:ribosome biogenesis"/>
    <property type="evidence" value="ECO:0007669"/>
    <property type="project" value="UniProtKB-KW"/>
</dbReference>
<dbReference type="CDD" id="cd01894">
    <property type="entry name" value="EngA1"/>
    <property type="match status" value="1"/>
</dbReference>
<dbReference type="CDD" id="cd01895">
    <property type="entry name" value="EngA2"/>
    <property type="match status" value="1"/>
</dbReference>
<dbReference type="FunFam" id="3.30.300.20:FF:000004">
    <property type="entry name" value="GTPase Der"/>
    <property type="match status" value="1"/>
</dbReference>
<dbReference type="FunFam" id="3.40.50.300:FF:000040">
    <property type="entry name" value="GTPase Der"/>
    <property type="match status" value="1"/>
</dbReference>
<dbReference type="FunFam" id="3.40.50.300:FF:001185">
    <property type="entry name" value="GTPase Der"/>
    <property type="match status" value="1"/>
</dbReference>
<dbReference type="Gene3D" id="3.30.300.20">
    <property type="match status" value="1"/>
</dbReference>
<dbReference type="Gene3D" id="3.40.50.300">
    <property type="entry name" value="P-loop containing nucleotide triphosphate hydrolases"/>
    <property type="match status" value="2"/>
</dbReference>
<dbReference type="HAMAP" id="MF_00195">
    <property type="entry name" value="GTPase_Der"/>
    <property type="match status" value="1"/>
</dbReference>
<dbReference type="InterPro" id="IPR031166">
    <property type="entry name" value="G_ENGA"/>
</dbReference>
<dbReference type="InterPro" id="IPR006073">
    <property type="entry name" value="GTP-bd"/>
</dbReference>
<dbReference type="InterPro" id="IPR016484">
    <property type="entry name" value="GTPase_Der"/>
</dbReference>
<dbReference type="InterPro" id="IPR032859">
    <property type="entry name" value="KH_dom-like"/>
</dbReference>
<dbReference type="InterPro" id="IPR015946">
    <property type="entry name" value="KH_dom-like_a/b"/>
</dbReference>
<dbReference type="InterPro" id="IPR027417">
    <property type="entry name" value="P-loop_NTPase"/>
</dbReference>
<dbReference type="InterPro" id="IPR005225">
    <property type="entry name" value="Small_GTP-bd"/>
</dbReference>
<dbReference type="NCBIfam" id="TIGR03594">
    <property type="entry name" value="GTPase_EngA"/>
    <property type="match status" value="1"/>
</dbReference>
<dbReference type="NCBIfam" id="TIGR00231">
    <property type="entry name" value="small_GTP"/>
    <property type="match status" value="2"/>
</dbReference>
<dbReference type="PANTHER" id="PTHR43834">
    <property type="entry name" value="GTPASE DER"/>
    <property type="match status" value="1"/>
</dbReference>
<dbReference type="PANTHER" id="PTHR43834:SF6">
    <property type="entry name" value="GTPASE DER"/>
    <property type="match status" value="1"/>
</dbReference>
<dbReference type="Pfam" id="PF14714">
    <property type="entry name" value="KH_dom-like"/>
    <property type="match status" value="1"/>
</dbReference>
<dbReference type="Pfam" id="PF01926">
    <property type="entry name" value="MMR_HSR1"/>
    <property type="match status" value="2"/>
</dbReference>
<dbReference type="PIRSF" id="PIRSF006485">
    <property type="entry name" value="GTP-binding_EngA"/>
    <property type="match status" value="1"/>
</dbReference>
<dbReference type="PRINTS" id="PR00326">
    <property type="entry name" value="GTP1OBG"/>
</dbReference>
<dbReference type="SUPFAM" id="SSF52540">
    <property type="entry name" value="P-loop containing nucleoside triphosphate hydrolases"/>
    <property type="match status" value="2"/>
</dbReference>
<dbReference type="PROSITE" id="PS51712">
    <property type="entry name" value="G_ENGA"/>
    <property type="match status" value="2"/>
</dbReference>
<protein>
    <recommendedName>
        <fullName evidence="1">GTPase Der</fullName>
    </recommendedName>
    <alternativeName>
        <fullName evidence="1">GTP-binding protein EngA</fullName>
    </alternativeName>
</protein>